<reference key="1">
    <citation type="submission" date="2006-12" db="EMBL/GenBank/DDBJ databases">
        <title>Complete sequence of Halorhodospira halophila SL1.</title>
        <authorList>
            <consortium name="US DOE Joint Genome Institute"/>
            <person name="Copeland A."/>
            <person name="Lucas S."/>
            <person name="Lapidus A."/>
            <person name="Barry K."/>
            <person name="Detter J.C."/>
            <person name="Glavina del Rio T."/>
            <person name="Hammon N."/>
            <person name="Israni S."/>
            <person name="Dalin E."/>
            <person name="Tice H."/>
            <person name="Pitluck S."/>
            <person name="Saunders E."/>
            <person name="Brettin T."/>
            <person name="Bruce D."/>
            <person name="Han C."/>
            <person name="Tapia R."/>
            <person name="Schmutz J."/>
            <person name="Larimer F."/>
            <person name="Land M."/>
            <person name="Hauser L."/>
            <person name="Kyrpides N."/>
            <person name="Mikhailova N."/>
            <person name="Hoff W."/>
            <person name="Richardson P."/>
        </authorList>
    </citation>
    <scope>NUCLEOTIDE SEQUENCE [LARGE SCALE GENOMIC DNA]</scope>
    <source>
        <strain>DSM 244 / SL1</strain>
    </source>
</reference>
<feature type="chain" id="PRO_1000054472" description="Large ribosomal subunit protein uL15">
    <location>
        <begin position="1"/>
        <end position="146"/>
    </location>
</feature>
<feature type="region of interest" description="Disordered" evidence="2">
    <location>
        <begin position="1"/>
        <end position="54"/>
    </location>
</feature>
<feature type="compositionally biased region" description="Polar residues" evidence="2">
    <location>
        <begin position="1"/>
        <end position="10"/>
    </location>
</feature>
<feature type="compositionally biased region" description="Gly residues" evidence="2">
    <location>
        <begin position="21"/>
        <end position="31"/>
    </location>
</feature>
<accession>A1WVA3</accession>
<organism>
    <name type="scientific">Halorhodospira halophila (strain DSM 244 / SL1)</name>
    <name type="common">Ectothiorhodospira halophila (strain DSM 244 / SL1)</name>
    <dbReference type="NCBI Taxonomy" id="349124"/>
    <lineage>
        <taxon>Bacteria</taxon>
        <taxon>Pseudomonadati</taxon>
        <taxon>Pseudomonadota</taxon>
        <taxon>Gammaproteobacteria</taxon>
        <taxon>Chromatiales</taxon>
        <taxon>Ectothiorhodospiraceae</taxon>
        <taxon>Halorhodospira</taxon>
    </lineage>
</organism>
<gene>
    <name evidence="1" type="primary">rplO</name>
    <name type="ordered locus">Hhal_0839</name>
</gene>
<protein>
    <recommendedName>
        <fullName evidence="1">Large ribosomal subunit protein uL15</fullName>
    </recommendedName>
    <alternativeName>
        <fullName evidence="3">50S ribosomal protein L15</fullName>
    </alternativeName>
</protein>
<name>RL15_HALHL</name>
<evidence type="ECO:0000255" key="1">
    <source>
        <dbReference type="HAMAP-Rule" id="MF_01341"/>
    </source>
</evidence>
<evidence type="ECO:0000256" key="2">
    <source>
        <dbReference type="SAM" id="MobiDB-lite"/>
    </source>
</evidence>
<evidence type="ECO:0000305" key="3"/>
<dbReference type="EMBL" id="CP000544">
    <property type="protein sequence ID" value="ABM61615.1"/>
    <property type="molecule type" value="Genomic_DNA"/>
</dbReference>
<dbReference type="RefSeq" id="WP_011813638.1">
    <property type="nucleotide sequence ID" value="NC_008789.1"/>
</dbReference>
<dbReference type="SMR" id="A1WVA3"/>
<dbReference type="STRING" id="349124.Hhal_0839"/>
<dbReference type="KEGG" id="hha:Hhal_0839"/>
<dbReference type="eggNOG" id="COG0200">
    <property type="taxonomic scope" value="Bacteria"/>
</dbReference>
<dbReference type="HOGENOM" id="CLU_055188_4_2_6"/>
<dbReference type="OrthoDB" id="9810293at2"/>
<dbReference type="Proteomes" id="UP000000647">
    <property type="component" value="Chromosome"/>
</dbReference>
<dbReference type="GO" id="GO:0022625">
    <property type="term" value="C:cytosolic large ribosomal subunit"/>
    <property type="evidence" value="ECO:0007669"/>
    <property type="project" value="TreeGrafter"/>
</dbReference>
<dbReference type="GO" id="GO:0019843">
    <property type="term" value="F:rRNA binding"/>
    <property type="evidence" value="ECO:0007669"/>
    <property type="project" value="UniProtKB-UniRule"/>
</dbReference>
<dbReference type="GO" id="GO:0003735">
    <property type="term" value="F:structural constituent of ribosome"/>
    <property type="evidence" value="ECO:0007669"/>
    <property type="project" value="InterPro"/>
</dbReference>
<dbReference type="GO" id="GO:0006412">
    <property type="term" value="P:translation"/>
    <property type="evidence" value="ECO:0007669"/>
    <property type="project" value="UniProtKB-UniRule"/>
</dbReference>
<dbReference type="Gene3D" id="3.100.10.10">
    <property type="match status" value="1"/>
</dbReference>
<dbReference type="HAMAP" id="MF_01341">
    <property type="entry name" value="Ribosomal_uL15"/>
    <property type="match status" value="1"/>
</dbReference>
<dbReference type="InterPro" id="IPR030878">
    <property type="entry name" value="Ribosomal_uL15"/>
</dbReference>
<dbReference type="InterPro" id="IPR021131">
    <property type="entry name" value="Ribosomal_uL15/eL18"/>
</dbReference>
<dbReference type="InterPro" id="IPR036227">
    <property type="entry name" value="Ribosomal_uL15/eL18_sf"/>
</dbReference>
<dbReference type="InterPro" id="IPR005749">
    <property type="entry name" value="Ribosomal_uL15_bac-type"/>
</dbReference>
<dbReference type="InterPro" id="IPR001196">
    <property type="entry name" value="Ribosomal_uL15_CS"/>
</dbReference>
<dbReference type="NCBIfam" id="TIGR01071">
    <property type="entry name" value="rplO_bact"/>
    <property type="match status" value="1"/>
</dbReference>
<dbReference type="PANTHER" id="PTHR12934">
    <property type="entry name" value="50S RIBOSOMAL PROTEIN L15"/>
    <property type="match status" value="1"/>
</dbReference>
<dbReference type="PANTHER" id="PTHR12934:SF11">
    <property type="entry name" value="LARGE RIBOSOMAL SUBUNIT PROTEIN UL15M"/>
    <property type="match status" value="1"/>
</dbReference>
<dbReference type="Pfam" id="PF00828">
    <property type="entry name" value="Ribosomal_L27A"/>
    <property type="match status" value="1"/>
</dbReference>
<dbReference type="SUPFAM" id="SSF52080">
    <property type="entry name" value="Ribosomal proteins L15p and L18e"/>
    <property type="match status" value="1"/>
</dbReference>
<dbReference type="PROSITE" id="PS00475">
    <property type="entry name" value="RIBOSOMAL_L15"/>
    <property type="match status" value="1"/>
</dbReference>
<sequence>MRLNQLSPSAGSRPDAKRAGRGAGSGLGKTAGRGHKGQHSRSGGFHKVGFEGGQMPLQRRVPKYGFSSQKGLRTAEVRLHEIARVDGDTVDLAALHKAGVVRKNMRYVKVIASGTIDRAVSVRGVKVTQGARKAIEAAGGQVVEEG</sequence>
<comment type="function">
    <text evidence="1">Binds to the 23S rRNA.</text>
</comment>
<comment type="subunit">
    <text evidence="1">Part of the 50S ribosomal subunit.</text>
</comment>
<comment type="similarity">
    <text evidence="1">Belongs to the universal ribosomal protein uL15 family.</text>
</comment>
<keyword id="KW-1185">Reference proteome</keyword>
<keyword id="KW-0687">Ribonucleoprotein</keyword>
<keyword id="KW-0689">Ribosomal protein</keyword>
<keyword id="KW-0694">RNA-binding</keyword>
<keyword id="KW-0699">rRNA-binding</keyword>
<proteinExistence type="inferred from homology"/>